<organismHost>
    <name type="scientific">Choristoneura fumiferana</name>
    <name type="common">Spruce budworm moth</name>
    <name type="synonym">Archips fumiferana</name>
    <dbReference type="NCBI Taxonomy" id="7141"/>
</organismHost>
<dbReference type="EC" id="3.6.1.15"/>
<dbReference type="EMBL" id="M60400">
    <property type="protein sequence ID" value="AAA42886.1"/>
    <property type="molecule type" value="Genomic_DNA"/>
</dbReference>
<dbReference type="PIR" id="A39154">
    <property type="entry name" value="NPVZCP"/>
</dbReference>
<dbReference type="SMR" id="P24486"/>
<dbReference type="GO" id="GO:0044423">
    <property type="term" value="C:virion component"/>
    <property type="evidence" value="ECO:0007669"/>
    <property type="project" value="UniProtKB-KW"/>
</dbReference>
<dbReference type="GO" id="GO:0005524">
    <property type="term" value="F:ATP binding"/>
    <property type="evidence" value="ECO:0007669"/>
    <property type="project" value="UniProtKB-KW"/>
</dbReference>
<dbReference type="GO" id="GO:0003677">
    <property type="term" value="F:DNA binding"/>
    <property type="evidence" value="ECO:0007669"/>
    <property type="project" value="UniProtKB-KW"/>
</dbReference>
<dbReference type="GO" id="GO:0017111">
    <property type="term" value="F:ribonucleoside triphosphate phosphatase activity"/>
    <property type="evidence" value="ECO:0007669"/>
    <property type="project" value="UniProtKB-EC"/>
</dbReference>
<dbReference type="GO" id="GO:0006351">
    <property type="term" value="P:DNA-templated transcription"/>
    <property type="evidence" value="ECO:0007669"/>
    <property type="project" value="InterPro"/>
</dbReference>
<dbReference type="CDD" id="cd18785">
    <property type="entry name" value="SF2_C"/>
    <property type="match status" value="1"/>
</dbReference>
<dbReference type="Gene3D" id="3.40.50.300">
    <property type="entry name" value="P-loop containing nucleotide triphosphate hydrolases"/>
    <property type="match status" value="2"/>
</dbReference>
<dbReference type="InterPro" id="IPR014001">
    <property type="entry name" value="Helicase_ATP-bd"/>
</dbReference>
<dbReference type="InterPro" id="IPR001650">
    <property type="entry name" value="Helicase_C-like"/>
</dbReference>
<dbReference type="InterPro" id="IPR013676">
    <property type="entry name" value="NPHI_C"/>
</dbReference>
<dbReference type="InterPro" id="IPR027417">
    <property type="entry name" value="P-loop_NTPase"/>
</dbReference>
<dbReference type="InterPro" id="IPR000330">
    <property type="entry name" value="SNF2_N"/>
</dbReference>
<dbReference type="PANTHER" id="PTHR10799">
    <property type="entry name" value="SNF2/RAD54 HELICASE FAMILY"/>
    <property type="match status" value="1"/>
</dbReference>
<dbReference type="Pfam" id="PF00271">
    <property type="entry name" value="Helicase_C"/>
    <property type="match status" value="1"/>
</dbReference>
<dbReference type="Pfam" id="PF08469">
    <property type="entry name" value="NPHI_C"/>
    <property type="match status" value="1"/>
</dbReference>
<dbReference type="Pfam" id="PF00176">
    <property type="entry name" value="SNF2-rel_dom"/>
    <property type="match status" value="1"/>
</dbReference>
<dbReference type="SMART" id="SM00487">
    <property type="entry name" value="DEXDc"/>
    <property type="match status" value="1"/>
</dbReference>
<dbReference type="SMART" id="SM00490">
    <property type="entry name" value="HELICc"/>
    <property type="match status" value="1"/>
</dbReference>
<dbReference type="SUPFAM" id="SSF52540">
    <property type="entry name" value="P-loop containing nucleoside triphosphate hydrolases"/>
    <property type="match status" value="2"/>
</dbReference>
<dbReference type="PROSITE" id="PS51192">
    <property type="entry name" value="HELICASE_ATP_BIND_1"/>
    <property type="match status" value="1"/>
</dbReference>
<dbReference type="PROSITE" id="PS51194">
    <property type="entry name" value="HELICASE_CTER"/>
    <property type="match status" value="1"/>
</dbReference>
<name>NTP1_CBEPV</name>
<evidence type="ECO:0000250" key="1"/>
<evidence type="ECO:0000255" key="2">
    <source>
        <dbReference type="PROSITE-ProRule" id="PRU00541"/>
    </source>
</evidence>
<evidence type="ECO:0000255" key="3">
    <source>
        <dbReference type="PROSITE-ProRule" id="PRU00542"/>
    </source>
</evidence>
<evidence type="ECO:0000305" key="4"/>
<feature type="chain" id="PRO_0000099100" description="Nucleoside triphosphatase I">
    <location>
        <begin position="1"/>
        <end position="648"/>
    </location>
</feature>
<feature type="domain" description="Helicase ATP-binding" evidence="2">
    <location>
        <begin position="48"/>
        <end position="213"/>
    </location>
</feature>
<feature type="domain" description="Helicase C-terminal" evidence="3">
    <location>
        <begin position="379"/>
        <end position="542"/>
    </location>
</feature>
<feature type="region of interest" description="Binding to the cap-specific mRNA (nucleoside-2'-O-)-methyltransferase" evidence="1">
    <location>
        <begin position="468"/>
        <end position="534"/>
    </location>
</feature>
<feature type="short sequence motif" description="DEXH box">
    <location>
        <begin position="151"/>
        <end position="154"/>
    </location>
</feature>
<feature type="binding site" evidence="2">
    <location>
        <begin position="61"/>
        <end position="68"/>
    </location>
    <ligand>
        <name>ATP</name>
        <dbReference type="ChEBI" id="CHEBI:30616"/>
    </ligand>
</feature>
<proteinExistence type="inferred from homology"/>
<protein>
    <recommendedName>
        <fullName>Nucleoside triphosphatase I</fullName>
        <ecNumber>3.6.1.15</ecNumber>
    </recommendedName>
    <alternativeName>
        <fullName>NPH-I</fullName>
    </alternativeName>
    <alternativeName>
        <fullName>Nucleoside triphosphate phosphohydrolase I</fullName>
        <shortName>NPH I</shortName>
    </alternativeName>
</protein>
<reference key="1">
    <citation type="journal article" date="1991" name="Virology">
        <title>DNA sequence of the nucleoside triphosphate phosphohydrolase I (NPH I) of the Choristoneura biennis entomopoxvirus.</title>
        <authorList>
            <person name="Yuen L."/>
            <person name="Noiseux M."/>
            <person name="Gomes M."/>
        </authorList>
    </citation>
    <scope>NUCLEOTIDE SEQUENCE [GENOMIC DNA]</scope>
</reference>
<keyword id="KW-0067">ATP-binding</keyword>
<keyword id="KW-0238">DNA-binding</keyword>
<keyword id="KW-0378">Hydrolase</keyword>
<keyword id="KW-0547">Nucleotide-binding</keyword>
<keyword id="KW-0804">Transcription</keyword>
<keyword id="KW-0946">Virion</keyword>
<gene>
    <name type="primary">NPH1</name>
</gene>
<organism>
    <name type="scientific">Choristoneura biennis entomopoxvirus</name>
    <name type="common">CbEPV</name>
    <dbReference type="NCBI Taxonomy" id="10288"/>
    <lineage>
        <taxon>Viruses</taxon>
        <taxon>Varidnaviria</taxon>
        <taxon>Bamfordvirae</taxon>
        <taxon>Nucleocytoviricota</taxon>
        <taxon>Pokkesviricetes</taxon>
        <taxon>Chitovirales</taxon>
        <taxon>Poxviridae</taxon>
        <taxon>Entomopoxvirinae</taxon>
        <taxon>Betaentomopoxvirus</taxon>
    </lineage>
</organism>
<accession>P24486</accession>
<sequence>MFALDSIVGKHINYALDKTQHLPNKINNSITNTEITLQDYQYFASRIFIGLKNLNSMLLFWDTGTGKTLTAVYIIKYIKELFPRWIILIFIKKSLYIDPWLNTISSYISDTSNIKFIYYDSTSSLDKKFNNIYRSIESSLNKKNRLLIIIDEVHKLISRSVKKDNNERNFTPIYRKLIKLANYENNKILCMSATPITNNIAEFNNLIGLLRPNVMNIKEEYINNGKLINFKEVRETLLGICSYKRLIEADSLTDTNYIDGYAKKSIFYHNIIMSDEQSKLYNMAERYDYKTELGGLKTMRRLISSFAFYDLKIKGDLDNVEYNEMIKRKLAEFSEFTKNINFSKAFINAFKNNEIKSKTDLLITDINNYNILYQYSCKYIEACRIILNSRGKVLLFEPLVNFEGISSLKYYFNCFNISYIEYSSKTIKMRDNDLNEYNNYENNDGNKIKVCIFSYAGSEGISFKCINDIIILDMPWNESELKQIIGRSIRLNSHEYLPINYRYVNVHFIISYSNNRKSVDKEMLDIIKNKQGKINVVFDLLKASSIETIHNMHKYIEPVDNEIIFEIIRKTRMKEMNISNVIINLKLYPITYCKDYDRATILKGFLNKDTNIIYDNDTPVAKLIVDNNNLPIFVIENDILIYITNDYY</sequence>
<comment type="function">
    <text evidence="1">DNA-dependent ATPase required for providing the needed energy to achieve the termination of early transcripts. Acts in concert with the RAP94 subunit of the virion RNA polymerase and the capping enzyme/VTF to catalyze release of UUUUUNU-containing nascent RNA from the elongation complex. NPH-I must bind ssDNA in order to exhibit ATPase activity (By similarity).</text>
</comment>
<comment type="catalytic activity">
    <reaction>
        <text>a ribonucleoside 5'-triphosphate + H2O = a ribonucleoside 5'-diphosphate + phosphate + H(+)</text>
        <dbReference type="Rhea" id="RHEA:23680"/>
        <dbReference type="ChEBI" id="CHEBI:15377"/>
        <dbReference type="ChEBI" id="CHEBI:15378"/>
        <dbReference type="ChEBI" id="CHEBI:43474"/>
        <dbReference type="ChEBI" id="CHEBI:57930"/>
        <dbReference type="ChEBI" id="CHEBI:61557"/>
        <dbReference type="EC" id="3.6.1.15"/>
    </reaction>
</comment>
<comment type="subunit">
    <text evidence="1">Monomer. Interacts (via C-terminus) with RAP94 (via N-terminus). Interacts with the cap-specific mRNA (nucleoside-2'-O-)-methyltransferase (By similarity).</text>
</comment>
<comment type="subcellular location">
    <subcellularLocation>
        <location evidence="1">Virion</location>
    </subcellularLocation>
    <text evidence="1">Virion core enzyme.</text>
</comment>
<comment type="similarity">
    <text evidence="4">Belongs to the helicase family. NPH I subfamily.</text>
</comment>